<proteinExistence type="inferred from homology"/>
<comment type="catalytic activity">
    <reaction evidence="1">
        <text>(6S)-5,6,7,8-tetrahydrofolate + formate + ATP = (6R)-10-formyltetrahydrofolate + ADP + phosphate</text>
        <dbReference type="Rhea" id="RHEA:20221"/>
        <dbReference type="ChEBI" id="CHEBI:15740"/>
        <dbReference type="ChEBI" id="CHEBI:30616"/>
        <dbReference type="ChEBI" id="CHEBI:43474"/>
        <dbReference type="ChEBI" id="CHEBI:57453"/>
        <dbReference type="ChEBI" id="CHEBI:195366"/>
        <dbReference type="ChEBI" id="CHEBI:456216"/>
        <dbReference type="EC" id="6.3.4.3"/>
    </reaction>
</comment>
<comment type="pathway">
    <text evidence="1">One-carbon metabolism; tetrahydrofolate interconversion.</text>
</comment>
<comment type="similarity">
    <text evidence="1">Belongs to the formate--tetrahydrofolate ligase family.</text>
</comment>
<gene>
    <name evidence="1" type="primary">fhs</name>
    <name type="ordered locus">Bind_1654</name>
</gene>
<feature type="chain" id="PRO_1000146675" description="Formate--tetrahydrofolate ligase">
    <location>
        <begin position="1"/>
        <end position="555"/>
    </location>
</feature>
<feature type="binding site" evidence="1">
    <location>
        <begin position="63"/>
        <end position="70"/>
    </location>
    <ligand>
        <name>ATP</name>
        <dbReference type="ChEBI" id="CHEBI:30616"/>
    </ligand>
</feature>
<keyword id="KW-0067">ATP-binding</keyword>
<keyword id="KW-0436">Ligase</keyword>
<keyword id="KW-0547">Nucleotide-binding</keyword>
<keyword id="KW-0554">One-carbon metabolism</keyword>
<keyword id="KW-1185">Reference proteome</keyword>
<organism>
    <name type="scientific">Beijerinckia indica subsp. indica (strain ATCC 9039 / DSM 1715 / NCIMB 8712)</name>
    <dbReference type="NCBI Taxonomy" id="395963"/>
    <lineage>
        <taxon>Bacteria</taxon>
        <taxon>Pseudomonadati</taxon>
        <taxon>Pseudomonadota</taxon>
        <taxon>Alphaproteobacteria</taxon>
        <taxon>Hyphomicrobiales</taxon>
        <taxon>Beijerinckiaceae</taxon>
        <taxon>Beijerinckia</taxon>
    </lineage>
</organism>
<evidence type="ECO:0000255" key="1">
    <source>
        <dbReference type="HAMAP-Rule" id="MF_01543"/>
    </source>
</evidence>
<dbReference type="EC" id="6.3.4.3" evidence="1"/>
<dbReference type="EMBL" id="CP001016">
    <property type="protein sequence ID" value="ACB95285.1"/>
    <property type="molecule type" value="Genomic_DNA"/>
</dbReference>
<dbReference type="RefSeq" id="WP_012384642.1">
    <property type="nucleotide sequence ID" value="NC_010581.1"/>
</dbReference>
<dbReference type="SMR" id="B2IC30"/>
<dbReference type="STRING" id="395963.Bind_1654"/>
<dbReference type="KEGG" id="bid:Bind_1654"/>
<dbReference type="eggNOG" id="COG2759">
    <property type="taxonomic scope" value="Bacteria"/>
</dbReference>
<dbReference type="HOGENOM" id="CLU_003601_3_3_5"/>
<dbReference type="OrthoDB" id="9761733at2"/>
<dbReference type="UniPathway" id="UPA00193"/>
<dbReference type="Proteomes" id="UP000001695">
    <property type="component" value="Chromosome"/>
</dbReference>
<dbReference type="GO" id="GO:0005524">
    <property type="term" value="F:ATP binding"/>
    <property type="evidence" value="ECO:0007669"/>
    <property type="project" value="UniProtKB-UniRule"/>
</dbReference>
<dbReference type="GO" id="GO:0004329">
    <property type="term" value="F:formate-tetrahydrofolate ligase activity"/>
    <property type="evidence" value="ECO:0007669"/>
    <property type="project" value="UniProtKB-UniRule"/>
</dbReference>
<dbReference type="GO" id="GO:0035999">
    <property type="term" value="P:tetrahydrofolate interconversion"/>
    <property type="evidence" value="ECO:0007669"/>
    <property type="project" value="UniProtKB-UniRule"/>
</dbReference>
<dbReference type="CDD" id="cd00477">
    <property type="entry name" value="FTHFS"/>
    <property type="match status" value="1"/>
</dbReference>
<dbReference type="FunFam" id="3.30.1510.10:FF:000001">
    <property type="entry name" value="Formate--tetrahydrofolate ligase"/>
    <property type="match status" value="1"/>
</dbReference>
<dbReference type="FunFam" id="3.10.410.10:FF:000001">
    <property type="entry name" value="Putative formate--tetrahydrofolate ligase"/>
    <property type="match status" value="1"/>
</dbReference>
<dbReference type="Gene3D" id="3.30.1510.10">
    <property type="entry name" value="Domain 2, N(10)-formyltetrahydrofolate synthetase"/>
    <property type="match status" value="1"/>
</dbReference>
<dbReference type="Gene3D" id="3.10.410.10">
    <property type="entry name" value="Formyltetrahydrofolate synthetase, domain 3"/>
    <property type="match status" value="1"/>
</dbReference>
<dbReference type="Gene3D" id="3.40.50.300">
    <property type="entry name" value="P-loop containing nucleotide triphosphate hydrolases"/>
    <property type="match status" value="1"/>
</dbReference>
<dbReference type="HAMAP" id="MF_01543">
    <property type="entry name" value="FTHFS"/>
    <property type="match status" value="1"/>
</dbReference>
<dbReference type="InterPro" id="IPR000559">
    <property type="entry name" value="Formate_THF_ligase"/>
</dbReference>
<dbReference type="InterPro" id="IPR020628">
    <property type="entry name" value="Formate_THF_ligase_CS"/>
</dbReference>
<dbReference type="InterPro" id="IPR027417">
    <property type="entry name" value="P-loop_NTPase"/>
</dbReference>
<dbReference type="NCBIfam" id="NF010030">
    <property type="entry name" value="PRK13505.1"/>
    <property type="match status" value="1"/>
</dbReference>
<dbReference type="Pfam" id="PF01268">
    <property type="entry name" value="FTHFS"/>
    <property type="match status" value="1"/>
</dbReference>
<dbReference type="SUPFAM" id="SSF52540">
    <property type="entry name" value="P-loop containing nucleoside triphosphate hydrolases"/>
    <property type="match status" value="1"/>
</dbReference>
<dbReference type="PROSITE" id="PS00722">
    <property type="entry name" value="FTHFS_2"/>
    <property type="match status" value="1"/>
</dbReference>
<name>FTHS_BEII9</name>
<reference key="1">
    <citation type="journal article" date="2010" name="J. Bacteriol.">
        <title>Complete genome sequence of Beijerinckia indica subsp. indica.</title>
        <authorList>
            <person name="Tamas I."/>
            <person name="Dedysh S.N."/>
            <person name="Liesack W."/>
            <person name="Stott M.B."/>
            <person name="Alam M."/>
            <person name="Murrell J.C."/>
            <person name="Dunfield P.F."/>
        </authorList>
    </citation>
    <scope>NUCLEOTIDE SEQUENCE [LARGE SCALE GENOMIC DNA]</scope>
    <source>
        <strain>ATCC 9039 / DSM 1715 / NCIMB 8712</strain>
    </source>
</reference>
<accession>B2IC30</accession>
<sequence>MSSDLEIARAAKLRPIATVADEAKIPAEALHSYGLHVAKIDTSLLPKKDRPAKLVLVTAINPTPAGEGKTTTTIGLGDALRRLGKACVIALREPSLGPCFGTKGGATGGGYAQIVPMERINLHLTGDFHAITSAHNLLAALIDNHLYWGAEPKIDSRKVAWRRVLDMNDRALRQIVVGLGGGGNGYPRETGFDITAASEIMAIFCLSKDLADLQQRLAQIIVAQDVNKQPVRADALQAVGAMTVLLKDALMPNLVQTLEGTPTFVHGGPFANIAHGCNSVAATLAAMQLGDYVVTEAGFGADLGAEKFLDIKCRQAGIAPSAAVIVATARALKSHGGVAPADLNKENLDALKAGLANLGRHIANVKKFGLPVVVAINHFLSDTEAEQELIAHTCRDEYGVEAIDCRHWAAGGKGALALAEKVIALVEGGTAQFKMLYEDTLPLIEKMRRIAQEIYGAADISLDAKAKKQLADIEAQGFGHFPVCVAKTQYSFAADPKLLGAPTGHIVPIREVRLSAGAGFVVMICGDIMTMPGLSRQPAAWKIGLDAQGNIEGLF</sequence>
<protein>
    <recommendedName>
        <fullName evidence="1">Formate--tetrahydrofolate ligase</fullName>
        <ecNumber evidence="1">6.3.4.3</ecNumber>
    </recommendedName>
    <alternativeName>
        <fullName evidence="1">Formyltetrahydrofolate synthetase</fullName>
        <shortName evidence="1">FHS</shortName>
        <shortName evidence="1">FTHFS</shortName>
    </alternativeName>
</protein>